<accession>Q8N0Y5</accession>
<accession>B2RNN4</accession>
<accession>Q6IFC0</accession>
<accession>Q96RC5</accession>
<keyword id="KW-1003">Cell membrane</keyword>
<keyword id="KW-1015">Disulfide bond</keyword>
<keyword id="KW-0297">G-protein coupled receptor</keyword>
<keyword id="KW-0325">Glycoprotein</keyword>
<keyword id="KW-0472">Membrane</keyword>
<keyword id="KW-0552">Olfaction</keyword>
<keyword id="KW-0675">Receptor</keyword>
<keyword id="KW-1185">Reference proteome</keyword>
<keyword id="KW-0716">Sensory transduction</keyword>
<keyword id="KW-0807">Transducer</keyword>
<keyword id="KW-0812">Transmembrane</keyword>
<keyword id="KW-1133">Transmembrane helix</keyword>
<comment type="function">
    <text evidence="3">Odorant receptor.</text>
</comment>
<comment type="subcellular location">
    <subcellularLocation>
        <location>Cell membrane</location>
        <topology>Multi-pass membrane protein</topology>
    </subcellularLocation>
</comment>
<comment type="similarity">
    <text evidence="2">Belongs to the G-protein coupled receptor 1 family.</text>
</comment>
<comment type="online information" name="Human Olfactory Receptor Data Exploratorium (HORDE)">
    <link uri="http://genome.weizmann.ac.il/horde/card/index/symbol:OR8I2"/>
</comment>
<evidence type="ECO:0000255" key="1"/>
<evidence type="ECO:0000255" key="2">
    <source>
        <dbReference type="PROSITE-ProRule" id="PRU00521"/>
    </source>
</evidence>
<evidence type="ECO:0000305" key="3"/>
<name>OR8I2_HUMAN</name>
<protein>
    <recommendedName>
        <fullName>Olfactory receptor 8I2</fullName>
    </recommendedName>
    <alternativeName>
        <fullName>Olfactory receptor OR11-170</fullName>
    </alternativeName>
</protein>
<organism>
    <name type="scientific">Homo sapiens</name>
    <name type="common">Human</name>
    <dbReference type="NCBI Taxonomy" id="9606"/>
    <lineage>
        <taxon>Eukaryota</taxon>
        <taxon>Metazoa</taxon>
        <taxon>Chordata</taxon>
        <taxon>Craniata</taxon>
        <taxon>Vertebrata</taxon>
        <taxon>Euteleostomi</taxon>
        <taxon>Mammalia</taxon>
        <taxon>Eutheria</taxon>
        <taxon>Euarchontoglires</taxon>
        <taxon>Primates</taxon>
        <taxon>Haplorrhini</taxon>
        <taxon>Catarrhini</taxon>
        <taxon>Hominidae</taxon>
        <taxon>Homo</taxon>
    </lineage>
</organism>
<sequence>MAGNNFTEVTVFILSGFANHPELQVSLFLMFLFIYLFTVLGNLGLITLIRMDSQLHTPMYFFLSNLAFIDIFYSSTVTPKALVNFQSNRRSISFVGCFVQMYFFVGLVCCECFLLGSMAYNRYIAICNPLLYSVVMSQKVSNWLGVMPYVIGFTSSLISVWVISSLAFCDSSINHFFCDTTALLALSCVDTFGTEMVSFVLAGFTLLSSLLIITVTYIIIISAILRIQSAAGRQKAFSTCASHLMAVTIFYGSLIFTYLQPDNTSSLTQAQVASVFYTIVIPMLNPLIYSLRNKDVKNALLRVIHRKLFP</sequence>
<gene>
    <name type="primary">OR8I2</name>
</gene>
<feature type="chain" id="PRO_0000150668" description="Olfactory receptor 8I2">
    <location>
        <begin position="1"/>
        <end position="310"/>
    </location>
</feature>
<feature type="topological domain" description="Extracellular" evidence="1">
    <location>
        <begin position="1"/>
        <end position="25"/>
    </location>
</feature>
<feature type="transmembrane region" description="Helical; Name=1" evidence="1">
    <location>
        <begin position="26"/>
        <end position="46"/>
    </location>
</feature>
<feature type="topological domain" description="Cytoplasmic" evidence="1">
    <location>
        <begin position="47"/>
        <end position="54"/>
    </location>
</feature>
<feature type="transmembrane region" description="Helical; Name=2" evidence="1">
    <location>
        <begin position="55"/>
        <end position="75"/>
    </location>
</feature>
<feature type="topological domain" description="Extracellular" evidence="1">
    <location>
        <begin position="76"/>
        <end position="99"/>
    </location>
</feature>
<feature type="transmembrane region" description="Helical; Name=3" evidence="1">
    <location>
        <begin position="100"/>
        <end position="120"/>
    </location>
</feature>
<feature type="topological domain" description="Cytoplasmic" evidence="1">
    <location>
        <begin position="121"/>
        <end position="139"/>
    </location>
</feature>
<feature type="transmembrane region" description="Helical; Name=4" evidence="1">
    <location>
        <begin position="140"/>
        <end position="160"/>
    </location>
</feature>
<feature type="topological domain" description="Extracellular" evidence="1">
    <location>
        <begin position="161"/>
        <end position="196"/>
    </location>
</feature>
<feature type="transmembrane region" description="Helical; Name=5" evidence="1">
    <location>
        <begin position="197"/>
        <end position="216"/>
    </location>
</feature>
<feature type="topological domain" description="Cytoplasmic" evidence="1">
    <location>
        <begin position="217"/>
        <end position="236"/>
    </location>
</feature>
<feature type="transmembrane region" description="Helical; Name=6" evidence="1">
    <location>
        <begin position="237"/>
        <end position="257"/>
    </location>
</feature>
<feature type="topological domain" description="Extracellular" evidence="1">
    <location>
        <begin position="258"/>
        <end position="270"/>
    </location>
</feature>
<feature type="transmembrane region" description="Helical; Name=7" evidence="1">
    <location>
        <begin position="271"/>
        <end position="291"/>
    </location>
</feature>
<feature type="topological domain" description="Cytoplasmic" evidence="1">
    <location>
        <begin position="292"/>
        <end position="310"/>
    </location>
</feature>
<feature type="glycosylation site" description="N-linked (GlcNAc...) asparagine" evidence="1">
    <location>
        <position position="5"/>
    </location>
</feature>
<feature type="disulfide bond" evidence="2">
    <location>
        <begin position="97"/>
        <end position="188"/>
    </location>
</feature>
<feature type="sequence variant" id="VAR_034266" description="In dbSNP:rs17603011.">
    <original>I</original>
    <variation>V</variation>
    <location>
        <position position="124"/>
    </location>
</feature>
<feature type="sequence variant" id="VAR_034267" description="In dbSNP:rs17150021.">
    <original>K</original>
    <variation>N</variation>
    <location>
        <position position="139"/>
    </location>
</feature>
<proteinExistence type="evidence at transcript level"/>
<reference key="1">
    <citation type="submission" date="2001-07" db="EMBL/GenBank/DDBJ databases">
        <title>Genome-wide discovery and analysis of human seven transmembrane helix receptor genes.</title>
        <authorList>
            <person name="Suwa M."/>
            <person name="Sato T."/>
            <person name="Okouchi I."/>
            <person name="Arita M."/>
            <person name="Futami K."/>
            <person name="Matsumoto S."/>
            <person name="Tsutsumi S."/>
            <person name="Aburatani H."/>
            <person name="Asai K."/>
            <person name="Akiyama Y."/>
        </authorList>
    </citation>
    <scope>NUCLEOTIDE SEQUENCE [GENOMIC DNA]</scope>
</reference>
<reference key="2">
    <citation type="submission" date="2005-07" db="EMBL/GenBank/DDBJ databases">
        <authorList>
            <person name="Mural R.J."/>
            <person name="Istrail S."/>
            <person name="Sutton G.G."/>
            <person name="Florea L."/>
            <person name="Halpern A.L."/>
            <person name="Mobarry C.M."/>
            <person name="Lippert R."/>
            <person name="Walenz B."/>
            <person name="Shatkay H."/>
            <person name="Dew I."/>
            <person name="Miller J.R."/>
            <person name="Flanigan M.J."/>
            <person name="Edwards N.J."/>
            <person name="Bolanos R."/>
            <person name="Fasulo D."/>
            <person name="Halldorsson B.V."/>
            <person name="Hannenhalli S."/>
            <person name="Turner R."/>
            <person name="Yooseph S."/>
            <person name="Lu F."/>
            <person name="Nusskern D.R."/>
            <person name="Shue B.C."/>
            <person name="Zheng X.H."/>
            <person name="Zhong F."/>
            <person name="Delcher A.L."/>
            <person name="Huson D.H."/>
            <person name="Kravitz S.A."/>
            <person name="Mouchard L."/>
            <person name="Reinert K."/>
            <person name="Remington K.A."/>
            <person name="Clark A.G."/>
            <person name="Waterman M.S."/>
            <person name="Eichler E.E."/>
            <person name="Adams M.D."/>
            <person name="Hunkapiller M.W."/>
            <person name="Myers E.W."/>
            <person name="Venter J.C."/>
        </authorList>
    </citation>
    <scope>NUCLEOTIDE SEQUENCE [LARGE SCALE GENOMIC DNA]</scope>
</reference>
<reference key="3">
    <citation type="journal article" date="2004" name="Genome Res.">
        <title>The status, quality, and expansion of the NIH full-length cDNA project: the Mammalian Gene Collection (MGC).</title>
        <authorList>
            <consortium name="The MGC Project Team"/>
        </authorList>
    </citation>
    <scope>NUCLEOTIDE SEQUENCE [LARGE SCALE MRNA]</scope>
</reference>
<reference key="4">
    <citation type="journal article" date="2002" name="Genomics">
        <title>DEFOG: a practical scheme for deciphering families of genes.</title>
        <authorList>
            <person name="Fuchs T."/>
            <person name="Malecova B."/>
            <person name="Linhart C."/>
            <person name="Sharan R."/>
            <person name="Khen M."/>
            <person name="Herwig R."/>
            <person name="Shmulevich D."/>
            <person name="Elkon R."/>
            <person name="Steinfath M."/>
            <person name="O'Brien J.K."/>
            <person name="Radelof U."/>
            <person name="Lehrach H."/>
            <person name="Lancet D."/>
            <person name="Shamir R."/>
        </authorList>
    </citation>
    <scope>NUCLEOTIDE SEQUENCE [GENOMIC DNA] OF 68-282</scope>
</reference>
<reference key="5">
    <citation type="journal article" date="2004" name="Proc. Natl. Acad. Sci. U.S.A.">
        <title>The human olfactory receptor gene family.</title>
        <authorList>
            <person name="Malnic B."/>
            <person name="Godfrey P.A."/>
            <person name="Buck L.B."/>
        </authorList>
    </citation>
    <scope>IDENTIFICATION</scope>
</reference>
<reference key="6">
    <citation type="journal article" date="2004" name="Proc. Natl. Acad. Sci. U.S.A.">
        <authorList>
            <person name="Malnic B."/>
            <person name="Godfrey P.A."/>
            <person name="Buck L.B."/>
        </authorList>
    </citation>
    <scope>ERRATUM OF PUBMED:14983052</scope>
</reference>
<dbReference type="EMBL" id="AB065656">
    <property type="protein sequence ID" value="BAC05882.1"/>
    <property type="molecule type" value="Genomic_DNA"/>
</dbReference>
<dbReference type="EMBL" id="AB065844">
    <property type="protein sequence ID" value="BAC06062.1"/>
    <property type="molecule type" value="Genomic_DNA"/>
</dbReference>
<dbReference type="EMBL" id="CH471076">
    <property type="protein sequence ID" value="EAW73697.1"/>
    <property type="molecule type" value="Genomic_DNA"/>
</dbReference>
<dbReference type="EMBL" id="BC137007">
    <property type="protein sequence ID" value="AAI37008.1"/>
    <property type="molecule type" value="mRNA"/>
</dbReference>
<dbReference type="EMBL" id="BC137008">
    <property type="protein sequence ID" value="AAI37009.1"/>
    <property type="molecule type" value="mRNA"/>
</dbReference>
<dbReference type="EMBL" id="AF399513">
    <property type="protein sequence ID" value="AAK94998.1"/>
    <property type="molecule type" value="Genomic_DNA"/>
</dbReference>
<dbReference type="EMBL" id="BK004342">
    <property type="protein sequence ID" value="DAA04740.1"/>
    <property type="molecule type" value="Genomic_DNA"/>
</dbReference>
<dbReference type="CCDS" id="CCDS31517.1"/>
<dbReference type="RefSeq" id="NP_001003750.1">
    <property type="nucleotide sequence ID" value="NM_001003750.1"/>
</dbReference>
<dbReference type="SMR" id="Q8N0Y5"/>
<dbReference type="BioGRID" id="125691">
    <property type="interactions" value="1"/>
</dbReference>
<dbReference type="FunCoup" id="Q8N0Y5">
    <property type="interactions" value="416"/>
</dbReference>
<dbReference type="STRING" id="9606.ENSP00000303864"/>
<dbReference type="GlyCosmos" id="Q8N0Y5">
    <property type="glycosylation" value="1 site, No reported glycans"/>
</dbReference>
<dbReference type="GlyGen" id="Q8N0Y5">
    <property type="glycosylation" value="1 site"/>
</dbReference>
<dbReference type="BioMuta" id="OR8I2"/>
<dbReference type="DMDM" id="38372639"/>
<dbReference type="jPOST" id="Q8N0Y5"/>
<dbReference type="MassIVE" id="Q8N0Y5"/>
<dbReference type="PaxDb" id="9606-ENSP00000303864"/>
<dbReference type="PeptideAtlas" id="Q8N0Y5"/>
<dbReference type="Antibodypedia" id="58957">
    <property type="antibodies" value="54 antibodies from 18 providers"/>
</dbReference>
<dbReference type="DNASU" id="120586"/>
<dbReference type="Ensembl" id="ENST00000302124.8">
    <property type="protein sequence ID" value="ENSP00000303864.2"/>
    <property type="gene ID" value="ENSG00000172154.11"/>
</dbReference>
<dbReference type="GeneID" id="120586"/>
<dbReference type="KEGG" id="hsa:120586"/>
<dbReference type="MANE-Select" id="ENST00000302124.8">
    <property type="protein sequence ID" value="ENSP00000303864.2"/>
    <property type="RefSeq nucleotide sequence ID" value="NM_001003750.1"/>
    <property type="RefSeq protein sequence ID" value="NP_001003750.1"/>
</dbReference>
<dbReference type="UCSC" id="uc010rix.2">
    <property type="organism name" value="human"/>
</dbReference>
<dbReference type="AGR" id="HGNC:15310"/>
<dbReference type="CTD" id="120586"/>
<dbReference type="GeneCards" id="OR8I2"/>
<dbReference type="HGNC" id="HGNC:15310">
    <property type="gene designation" value="OR8I2"/>
</dbReference>
<dbReference type="HPA" id="ENSG00000172154">
    <property type="expression patterns" value="Not detected"/>
</dbReference>
<dbReference type="neXtProt" id="NX_Q8N0Y5"/>
<dbReference type="OpenTargets" id="ENSG00000172154"/>
<dbReference type="PharmGKB" id="PA32771"/>
<dbReference type="VEuPathDB" id="HostDB:ENSG00000172154"/>
<dbReference type="eggNOG" id="ENOG502SKRH">
    <property type="taxonomic scope" value="Eukaryota"/>
</dbReference>
<dbReference type="GeneTree" id="ENSGT01120000271889"/>
<dbReference type="HOGENOM" id="CLU_012526_5_5_1"/>
<dbReference type="InParanoid" id="Q8N0Y5"/>
<dbReference type="OMA" id="MPYAIGF"/>
<dbReference type="OrthoDB" id="9902777at2759"/>
<dbReference type="PAN-GO" id="Q8N0Y5">
    <property type="GO annotations" value="4 GO annotations based on evolutionary models"/>
</dbReference>
<dbReference type="PhylomeDB" id="Q8N0Y5"/>
<dbReference type="TreeFam" id="TF352753"/>
<dbReference type="PathwayCommons" id="Q8N0Y5"/>
<dbReference type="Reactome" id="R-HSA-9752946">
    <property type="pathway name" value="Expression and translocation of olfactory receptors"/>
</dbReference>
<dbReference type="SignaLink" id="Q8N0Y5"/>
<dbReference type="BioGRID-ORCS" id="120586">
    <property type="hits" value="22 hits in 675 CRISPR screens"/>
</dbReference>
<dbReference type="GeneWiki" id="OR8I2"/>
<dbReference type="GenomeRNAi" id="120586"/>
<dbReference type="Pharos" id="Q8N0Y5">
    <property type="development level" value="Tdark"/>
</dbReference>
<dbReference type="PRO" id="PR:Q8N0Y5"/>
<dbReference type="Proteomes" id="UP000005640">
    <property type="component" value="Chromosome 11"/>
</dbReference>
<dbReference type="RNAct" id="Q8N0Y5">
    <property type="molecule type" value="protein"/>
</dbReference>
<dbReference type="GO" id="GO:0005886">
    <property type="term" value="C:plasma membrane"/>
    <property type="evidence" value="ECO:0007669"/>
    <property type="project" value="UniProtKB-SubCell"/>
</dbReference>
<dbReference type="GO" id="GO:0004930">
    <property type="term" value="F:G protein-coupled receptor activity"/>
    <property type="evidence" value="ECO:0007669"/>
    <property type="project" value="UniProtKB-KW"/>
</dbReference>
<dbReference type="GO" id="GO:0005549">
    <property type="term" value="F:odorant binding"/>
    <property type="evidence" value="ECO:0000318"/>
    <property type="project" value="GO_Central"/>
</dbReference>
<dbReference type="GO" id="GO:0004984">
    <property type="term" value="F:olfactory receptor activity"/>
    <property type="evidence" value="ECO:0000318"/>
    <property type="project" value="GO_Central"/>
</dbReference>
<dbReference type="GO" id="GO:0007186">
    <property type="term" value="P:G protein-coupled receptor signaling pathway"/>
    <property type="evidence" value="ECO:0000318"/>
    <property type="project" value="GO_Central"/>
</dbReference>
<dbReference type="GO" id="GO:0007608">
    <property type="term" value="P:sensory perception of smell"/>
    <property type="evidence" value="ECO:0000318"/>
    <property type="project" value="GO_Central"/>
</dbReference>
<dbReference type="FunFam" id="1.20.1070.10:FF:000003">
    <property type="entry name" value="Olfactory receptor"/>
    <property type="match status" value="1"/>
</dbReference>
<dbReference type="Gene3D" id="1.20.1070.10">
    <property type="entry name" value="Rhodopsin 7-helix transmembrane proteins"/>
    <property type="match status" value="1"/>
</dbReference>
<dbReference type="InterPro" id="IPR000276">
    <property type="entry name" value="GPCR_Rhodpsn"/>
</dbReference>
<dbReference type="InterPro" id="IPR017452">
    <property type="entry name" value="GPCR_Rhodpsn_7TM"/>
</dbReference>
<dbReference type="InterPro" id="IPR000725">
    <property type="entry name" value="Olfact_rcpt"/>
</dbReference>
<dbReference type="PANTHER" id="PTHR48018">
    <property type="entry name" value="OLFACTORY RECEPTOR"/>
    <property type="match status" value="1"/>
</dbReference>
<dbReference type="Pfam" id="PF13853">
    <property type="entry name" value="7tm_4"/>
    <property type="match status" value="1"/>
</dbReference>
<dbReference type="PRINTS" id="PR00237">
    <property type="entry name" value="GPCRRHODOPSN"/>
</dbReference>
<dbReference type="PRINTS" id="PR00245">
    <property type="entry name" value="OLFACTORYR"/>
</dbReference>
<dbReference type="SUPFAM" id="SSF81321">
    <property type="entry name" value="Family A G protein-coupled receptor-like"/>
    <property type="match status" value="1"/>
</dbReference>
<dbReference type="PROSITE" id="PS00237">
    <property type="entry name" value="G_PROTEIN_RECEP_F1_1"/>
    <property type="match status" value="1"/>
</dbReference>
<dbReference type="PROSITE" id="PS50262">
    <property type="entry name" value="G_PROTEIN_RECEP_F1_2"/>
    <property type="match status" value="1"/>
</dbReference>